<sequence length="237" mass="25217">MRPSGRKLDQMRSVSIEPNVMKHAEGSCLIRMGETHVLCSASIEDKPPPFLKNTGLGWVTAEYGMLPRATTSRNRREATAGKQSGRTQEIQRLIGRALRAGIDRSALGERQIVIDCDVLQADGGTRCASITGGWVALRLAVNKLLKAGIVVSDPIVDHVAAVSCGIYAGQPVLDLDYAEDSTAGTDGNFVLTGRQRLIEVQMSAEGASFSRDEMGQLLDLAEAGIADLVAAQKAALG</sequence>
<evidence type="ECO:0000255" key="1">
    <source>
        <dbReference type="HAMAP-Rule" id="MF_00564"/>
    </source>
</evidence>
<comment type="function">
    <text evidence="1">Phosphorolytic 3'-5' exoribonuclease that plays an important role in tRNA 3'-end maturation. Removes nucleotide residues following the 3'-CCA terminus of tRNAs; can also add nucleotides to the ends of RNA molecules by using nucleoside diphosphates as substrates, but this may not be physiologically important. Probably plays a role in initiation of 16S rRNA degradation (leading to ribosome degradation) during starvation.</text>
</comment>
<comment type="catalytic activity">
    <reaction evidence="1">
        <text>tRNA(n+1) + phosphate = tRNA(n) + a ribonucleoside 5'-diphosphate</text>
        <dbReference type="Rhea" id="RHEA:10628"/>
        <dbReference type="Rhea" id="RHEA-COMP:17343"/>
        <dbReference type="Rhea" id="RHEA-COMP:17344"/>
        <dbReference type="ChEBI" id="CHEBI:43474"/>
        <dbReference type="ChEBI" id="CHEBI:57930"/>
        <dbReference type="ChEBI" id="CHEBI:173114"/>
        <dbReference type="EC" id="2.7.7.56"/>
    </reaction>
</comment>
<comment type="subunit">
    <text evidence="1">Homohexameric ring arranged as a trimer of dimers.</text>
</comment>
<comment type="similarity">
    <text evidence="1">Belongs to the RNase PH family.</text>
</comment>
<keyword id="KW-0548">Nucleotidyltransferase</keyword>
<keyword id="KW-0694">RNA-binding</keyword>
<keyword id="KW-0698">rRNA processing</keyword>
<keyword id="KW-0808">Transferase</keyword>
<keyword id="KW-0819">tRNA processing</keyword>
<keyword id="KW-0820">tRNA-binding</keyword>
<dbReference type="EC" id="2.7.7.56" evidence="1"/>
<dbReference type="EMBL" id="CP000661">
    <property type="protein sequence ID" value="ABP71545.1"/>
    <property type="molecule type" value="Genomic_DNA"/>
</dbReference>
<dbReference type="SMR" id="A4WVY1"/>
<dbReference type="STRING" id="349102.Rsph17025_2658"/>
<dbReference type="KEGG" id="rsq:Rsph17025_2658"/>
<dbReference type="eggNOG" id="COG0689">
    <property type="taxonomic scope" value="Bacteria"/>
</dbReference>
<dbReference type="HOGENOM" id="CLU_050858_0_0_5"/>
<dbReference type="GO" id="GO:0000175">
    <property type="term" value="F:3'-5'-RNA exonuclease activity"/>
    <property type="evidence" value="ECO:0007669"/>
    <property type="project" value="UniProtKB-UniRule"/>
</dbReference>
<dbReference type="GO" id="GO:0000049">
    <property type="term" value="F:tRNA binding"/>
    <property type="evidence" value="ECO:0007669"/>
    <property type="project" value="UniProtKB-UniRule"/>
</dbReference>
<dbReference type="GO" id="GO:0009022">
    <property type="term" value="F:tRNA nucleotidyltransferase activity"/>
    <property type="evidence" value="ECO:0007669"/>
    <property type="project" value="UniProtKB-UniRule"/>
</dbReference>
<dbReference type="GO" id="GO:0016075">
    <property type="term" value="P:rRNA catabolic process"/>
    <property type="evidence" value="ECO:0007669"/>
    <property type="project" value="UniProtKB-UniRule"/>
</dbReference>
<dbReference type="GO" id="GO:0006364">
    <property type="term" value="P:rRNA processing"/>
    <property type="evidence" value="ECO:0007669"/>
    <property type="project" value="UniProtKB-KW"/>
</dbReference>
<dbReference type="GO" id="GO:0008033">
    <property type="term" value="P:tRNA processing"/>
    <property type="evidence" value="ECO:0007669"/>
    <property type="project" value="UniProtKB-UniRule"/>
</dbReference>
<dbReference type="CDD" id="cd11362">
    <property type="entry name" value="RNase_PH_bact"/>
    <property type="match status" value="1"/>
</dbReference>
<dbReference type="FunFam" id="3.30.230.70:FF:000003">
    <property type="entry name" value="Ribonuclease PH"/>
    <property type="match status" value="1"/>
</dbReference>
<dbReference type="Gene3D" id="3.30.230.70">
    <property type="entry name" value="GHMP Kinase, N-terminal domain"/>
    <property type="match status" value="1"/>
</dbReference>
<dbReference type="HAMAP" id="MF_00564">
    <property type="entry name" value="RNase_PH"/>
    <property type="match status" value="1"/>
</dbReference>
<dbReference type="InterPro" id="IPR001247">
    <property type="entry name" value="ExoRNase_PH_dom1"/>
</dbReference>
<dbReference type="InterPro" id="IPR015847">
    <property type="entry name" value="ExoRNase_PH_dom2"/>
</dbReference>
<dbReference type="InterPro" id="IPR036345">
    <property type="entry name" value="ExoRNase_PH_dom2_sf"/>
</dbReference>
<dbReference type="InterPro" id="IPR027408">
    <property type="entry name" value="PNPase/RNase_PH_dom_sf"/>
</dbReference>
<dbReference type="InterPro" id="IPR020568">
    <property type="entry name" value="Ribosomal_Su5_D2-typ_SF"/>
</dbReference>
<dbReference type="InterPro" id="IPR050080">
    <property type="entry name" value="RNase_PH"/>
</dbReference>
<dbReference type="InterPro" id="IPR002381">
    <property type="entry name" value="RNase_PH_bac-type"/>
</dbReference>
<dbReference type="InterPro" id="IPR018336">
    <property type="entry name" value="RNase_PH_CS"/>
</dbReference>
<dbReference type="NCBIfam" id="TIGR01966">
    <property type="entry name" value="RNasePH"/>
    <property type="match status" value="1"/>
</dbReference>
<dbReference type="PANTHER" id="PTHR11953">
    <property type="entry name" value="EXOSOME COMPLEX COMPONENT"/>
    <property type="match status" value="1"/>
</dbReference>
<dbReference type="PANTHER" id="PTHR11953:SF0">
    <property type="entry name" value="EXOSOME COMPLEX COMPONENT RRP41"/>
    <property type="match status" value="1"/>
</dbReference>
<dbReference type="Pfam" id="PF01138">
    <property type="entry name" value="RNase_PH"/>
    <property type="match status" value="1"/>
</dbReference>
<dbReference type="Pfam" id="PF03725">
    <property type="entry name" value="RNase_PH_C"/>
    <property type="match status" value="1"/>
</dbReference>
<dbReference type="SUPFAM" id="SSF55666">
    <property type="entry name" value="Ribonuclease PH domain 2-like"/>
    <property type="match status" value="1"/>
</dbReference>
<dbReference type="SUPFAM" id="SSF54211">
    <property type="entry name" value="Ribosomal protein S5 domain 2-like"/>
    <property type="match status" value="1"/>
</dbReference>
<dbReference type="PROSITE" id="PS01277">
    <property type="entry name" value="RIBONUCLEASE_PH"/>
    <property type="match status" value="1"/>
</dbReference>
<protein>
    <recommendedName>
        <fullName evidence="1">Ribonuclease PH</fullName>
        <shortName evidence="1">RNase PH</shortName>
        <ecNumber evidence="1">2.7.7.56</ecNumber>
    </recommendedName>
    <alternativeName>
        <fullName evidence="1">tRNA nucleotidyltransferase</fullName>
    </alternativeName>
</protein>
<proteinExistence type="inferred from homology"/>
<organism>
    <name type="scientific">Cereibacter sphaeroides (strain ATCC 17025 / ATH 2.4.3)</name>
    <name type="common">Rhodobacter sphaeroides</name>
    <dbReference type="NCBI Taxonomy" id="349102"/>
    <lineage>
        <taxon>Bacteria</taxon>
        <taxon>Pseudomonadati</taxon>
        <taxon>Pseudomonadota</taxon>
        <taxon>Alphaproteobacteria</taxon>
        <taxon>Rhodobacterales</taxon>
        <taxon>Paracoccaceae</taxon>
        <taxon>Cereibacter</taxon>
    </lineage>
</organism>
<feature type="chain" id="PRO_1000024868" description="Ribonuclease PH">
    <location>
        <begin position="1"/>
        <end position="237"/>
    </location>
</feature>
<feature type="binding site" evidence="1">
    <location>
        <position position="86"/>
    </location>
    <ligand>
        <name>phosphate</name>
        <dbReference type="ChEBI" id="CHEBI:43474"/>
        <note>substrate</note>
    </ligand>
</feature>
<feature type="binding site" evidence="1">
    <location>
        <begin position="124"/>
        <end position="126"/>
    </location>
    <ligand>
        <name>phosphate</name>
        <dbReference type="ChEBI" id="CHEBI:43474"/>
        <note>substrate</note>
    </ligand>
</feature>
<gene>
    <name evidence="1" type="primary">rph</name>
    <name type="ordered locus">Rsph17025_2658</name>
</gene>
<reference key="1">
    <citation type="submission" date="2007-04" db="EMBL/GenBank/DDBJ databases">
        <title>Complete sequence of chromosome of Rhodobacter sphaeroides ATCC 17025.</title>
        <authorList>
            <consortium name="US DOE Joint Genome Institute"/>
            <person name="Copeland A."/>
            <person name="Lucas S."/>
            <person name="Lapidus A."/>
            <person name="Barry K."/>
            <person name="Detter J.C."/>
            <person name="Glavina del Rio T."/>
            <person name="Hammon N."/>
            <person name="Israni S."/>
            <person name="Dalin E."/>
            <person name="Tice H."/>
            <person name="Pitluck S."/>
            <person name="Chertkov O."/>
            <person name="Brettin T."/>
            <person name="Bruce D."/>
            <person name="Han C."/>
            <person name="Schmutz J."/>
            <person name="Larimer F."/>
            <person name="Land M."/>
            <person name="Hauser L."/>
            <person name="Kyrpides N."/>
            <person name="Kim E."/>
            <person name="Richardson P."/>
            <person name="Mackenzie C."/>
            <person name="Choudhary M."/>
            <person name="Donohue T.J."/>
            <person name="Kaplan S."/>
        </authorList>
    </citation>
    <scope>NUCLEOTIDE SEQUENCE [LARGE SCALE GENOMIC DNA]</scope>
    <source>
        <strain>ATCC 17025 / ATH 2.4.3</strain>
    </source>
</reference>
<name>RNPH_CERS5</name>
<accession>A4WVY1</accession>